<comment type="function">
    <text evidence="1">Involved in the biosynthesis of isopentenyl diphosphate (IPP) and dimethylallyl diphosphate (DMAPP), two major building blocks of isoprenoid compounds. Catalyzes the conversion of 4-diphosphocytidyl-2-C-methyl-D-erythritol 2-phosphate (CDP-ME2P) to 2-C-methyl-D-erythritol 2,4-cyclodiphosphate (ME-CPP) with a corresponding release of cytidine 5-monophosphate (CMP).</text>
</comment>
<comment type="catalytic activity">
    <reaction evidence="1">
        <text>4-CDP-2-C-methyl-D-erythritol 2-phosphate = 2-C-methyl-D-erythritol 2,4-cyclic diphosphate + CMP</text>
        <dbReference type="Rhea" id="RHEA:23864"/>
        <dbReference type="ChEBI" id="CHEBI:57919"/>
        <dbReference type="ChEBI" id="CHEBI:58483"/>
        <dbReference type="ChEBI" id="CHEBI:60377"/>
        <dbReference type="EC" id="4.6.1.12"/>
    </reaction>
</comment>
<comment type="cofactor">
    <cofactor evidence="1">
        <name>a divalent metal cation</name>
        <dbReference type="ChEBI" id="CHEBI:60240"/>
    </cofactor>
    <text evidence="1">Binds 1 divalent metal cation per subunit.</text>
</comment>
<comment type="pathway">
    <text evidence="1">Isoprenoid biosynthesis; isopentenyl diphosphate biosynthesis via DXP pathway; isopentenyl diphosphate from 1-deoxy-D-xylulose 5-phosphate: step 4/6.</text>
</comment>
<comment type="subunit">
    <text evidence="1 2">Homotrimer.</text>
</comment>
<comment type="similarity">
    <text evidence="1 3">Belongs to the IspF family.</text>
</comment>
<gene>
    <name evidence="1" type="primary">ispF</name>
    <name type="ordered locus">FTT_1128</name>
</gene>
<reference key="1">
    <citation type="journal article" date="2005" name="Nat. Genet.">
        <title>The complete genome sequence of Francisella tularensis, the causative agent of tularemia.</title>
        <authorList>
            <person name="Larsson P."/>
            <person name="Oyston P.C.F."/>
            <person name="Chain P."/>
            <person name="Chu M.C."/>
            <person name="Duffield M."/>
            <person name="Fuxelius H.-H."/>
            <person name="Garcia E."/>
            <person name="Haelltorp G."/>
            <person name="Johansson D."/>
            <person name="Isherwood K.E."/>
            <person name="Karp P.D."/>
            <person name="Larsson E."/>
            <person name="Liu Y."/>
            <person name="Michell S."/>
            <person name="Prior J."/>
            <person name="Prior R."/>
            <person name="Malfatti S."/>
            <person name="Sjoestedt A."/>
            <person name="Svensson K."/>
            <person name="Thompson N."/>
            <person name="Vergez L."/>
            <person name="Wagg J.K."/>
            <person name="Wren B.W."/>
            <person name="Lindler L.E."/>
            <person name="Andersson S.G.E."/>
            <person name="Forsman M."/>
            <person name="Titball R.W."/>
        </authorList>
    </citation>
    <scope>NUCLEOTIDE SEQUENCE [LARGE SCALE GENOMIC DNA]</scope>
    <source>
        <strain>SCHU S4 / Schu 4</strain>
    </source>
</reference>
<reference key="2">
    <citation type="submission" date="2011-04" db="PDB data bank">
        <title>Crystal structure of 2-c-methyl-d-erythritol 2,4-cyclodiphos synthase from Francisella tularensis.</title>
        <authorList>
            <consortium name="Structural Genomics Of Infectious Diseases (CSGID)"/>
            <person name="Kim Y."/>
            <person name="Makowska-Grzyska M."/>
            <person name="Kwon K."/>
            <person name="Anderson W.F."/>
            <person name="Joachimiak A."/>
        </authorList>
    </citation>
    <scope>X-RAY CRYSTALLOGRAPHY (2.09 ANGSTROMS)</scope>
    <scope>SUBUNIT</scope>
</reference>
<dbReference type="EC" id="4.6.1.12" evidence="1"/>
<dbReference type="EMBL" id="AJ749949">
    <property type="protein sequence ID" value="CAG45761.1"/>
    <property type="molecule type" value="Genomic_DNA"/>
</dbReference>
<dbReference type="RefSeq" id="WP_003021309.1">
    <property type="nucleotide sequence ID" value="NC_006570.2"/>
</dbReference>
<dbReference type="RefSeq" id="YP_170101.1">
    <property type="nucleotide sequence ID" value="NC_006570.2"/>
</dbReference>
<dbReference type="PDB" id="3RE3">
    <property type="method" value="X-ray"/>
    <property type="resolution" value="2.64 A"/>
    <property type="chains" value="A/B/C/D=1-159"/>
</dbReference>
<dbReference type="PDBsum" id="3RE3"/>
<dbReference type="SMR" id="Q5NFU1"/>
<dbReference type="STRING" id="177416.FTT_1128"/>
<dbReference type="DNASU" id="3190836"/>
<dbReference type="EnsemblBacteria" id="CAG45761">
    <property type="protein sequence ID" value="CAG45761"/>
    <property type="gene ID" value="FTT_1128"/>
</dbReference>
<dbReference type="KEGG" id="ftu:FTT_1128"/>
<dbReference type="eggNOG" id="COG0245">
    <property type="taxonomic scope" value="Bacteria"/>
</dbReference>
<dbReference type="OrthoDB" id="9804336at2"/>
<dbReference type="UniPathway" id="UPA00056">
    <property type="reaction ID" value="UER00095"/>
</dbReference>
<dbReference type="EvolutionaryTrace" id="Q5NFU1"/>
<dbReference type="Proteomes" id="UP000001174">
    <property type="component" value="Chromosome"/>
</dbReference>
<dbReference type="GO" id="GO:0008685">
    <property type="term" value="F:2-C-methyl-D-erythritol 2,4-cyclodiphosphate synthase activity"/>
    <property type="evidence" value="ECO:0007669"/>
    <property type="project" value="UniProtKB-UniRule"/>
</dbReference>
<dbReference type="GO" id="GO:0046872">
    <property type="term" value="F:metal ion binding"/>
    <property type="evidence" value="ECO:0007669"/>
    <property type="project" value="UniProtKB-KW"/>
</dbReference>
<dbReference type="GO" id="GO:0019288">
    <property type="term" value="P:isopentenyl diphosphate biosynthetic process, methylerythritol 4-phosphate pathway"/>
    <property type="evidence" value="ECO:0007669"/>
    <property type="project" value="UniProtKB-UniRule"/>
</dbReference>
<dbReference type="GO" id="GO:0016114">
    <property type="term" value="P:terpenoid biosynthetic process"/>
    <property type="evidence" value="ECO:0007669"/>
    <property type="project" value="InterPro"/>
</dbReference>
<dbReference type="CDD" id="cd00554">
    <property type="entry name" value="MECDP_synthase"/>
    <property type="match status" value="1"/>
</dbReference>
<dbReference type="FunFam" id="3.30.1330.50:FF:000001">
    <property type="entry name" value="2-C-methyl-D-erythritol 2,4-cyclodiphosphate synthase"/>
    <property type="match status" value="1"/>
</dbReference>
<dbReference type="Gene3D" id="3.30.1330.50">
    <property type="entry name" value="2-C-methyl-D-erythritol 2,4-cyclodiphosphate synthase"/>
    <property type="match status" value="1"/>
</dbReference>
<dbReference type="HAMAP" id="MF_00107">
    <property type="entry name" value="IspF"/>
    <property type="match status" value="1"/>
</dbReference>
<dbReference type="InterPro" id="IPR003526">
    <property type="entry name" value="MECDP_synthase"/>
</dbReference>
<dbReference type="InterPro" id="IPR020555">
    <property type="entry name" value="MECDP_synthase_CS"/>
</dbReference>
<dbReference type="InterPro" id="IPR036571">
    <property type="entry name" value="MECDP_synthase_sf"/>
</dbReference>
<dbReference type="NCBIfam" id="TIGR00151">
    <property type="entry name" value="ispF"/>
    <property type="match status" value="1"/>
</dbReference>
<dbReference type="PANTHER" id="PTHR43181">
    <property type="entry name" value="2-C-METHYL-D-ERYTHRITOL 2,4-CYCLODIPHOSPHATE SYNTHASE, CHLOROPLASTIC"/>
    <property type="match status" value="1"/>
</dbReference>
<dbReference type="PANTHER" id="PTHR43181:SF1">
    <property type="entry name" value="2-C-METHYL-D-ERYTHRITOL 2,4-CYCLODIPHOSPHATE SYNTHASE, CHLOROPLASTIC"/>
    <property type="match status" value="1"/>
</dbReference>
<dbReference type="Pfam" id="PF02542">
    <property type="entry name" value="YgbB"/>
    <property type="match status" value="1"/>
</dbReference>
<dbReference type="SUPFAM" id="SSF69765">
    <property type="entry name" value="IpsF-like"/>
    <property type="match status" value="1"/>
</dbReference>
<dbReference type="PROSITE" id="PS01350">
    <property type="entry name" value="ISPF"/>
    <property type="match status" value="1"/>
</dbReference>
<accession>Q5NFU1</accession>
<protein>
    <recommendedName>
        <fullName evidence="1">2-C-methyl-D-erythritol 2,4-cyclodiphosphate synthase</fullName>
        <shortName evidence="1">MECDP-synthase</shortName>
        <shortName evidence="1">MECPP-synthase</shortName>
        <shortName evidence="1">MECPS</shortName>
        <ecNumber evidence="1">4.6.1.12</ecNumber>
    </recommendedName>
</protein>
<keyword id="KW-0002">3D-structure</keyword>
<keyword id="KW-0414">Isoprene biosynthesis</keyword>
<keyword id="KW-0456">Lyase</keyword>
<keyword id="KW-0479">Metal-binding</keyword>
<keyword id="KW-1185">Reference proteome</keyword>
<sequence length="159" mass="17665">MSFRIGHGYDVHKFTSAKQNIIIGGVEIAYHLGLEAHSDGDVLIHALCDAILGALGLGDIGKHFLDTDNQFKNIDSKFFLAEIKKMLDKKQYSISNIDCTIIAQAPKMLPHIEKMRACLANILEIQISQINIKATTTERLGFIGREEGIATHVVCLLYR</sequence>
<evidence type="ECO:0000255" key="1">
    <source>
        <dbReference type="HAMAP-Rule" id="MF_00107"/>
    </source>
</evidence>
<evidence type="ECO:0000269" key="2">
    <source ref="2"/>
</evidence>
<evidence type="ECO:0000305" key="3"/>
<evidence type="ECO:0007829" key="4">
    <source>
        <dbReference type="PDB" id="3RE3"/>
    </source>
</evidence>
<organism>
    <name type="scientific">Francisella tularensis subsp. tularensis (strain SCHU S4 / Schu 4)</name>
    <dbReference type="NCBI Taxonomy" id="177416"/>
    <lineage>
        <taxon>Bacteria</taxon>
        <taxon>Pseudomonadati</taxon>
        <taxon>Pseudomonadota</taxon>
        <taxon>Gammaproteobacteria</taxon>
        <taxon>Thiotrichales</taxon>
        <taxon>Francisellaceae</taxon>
        <taxon>Francisella</taxon>
    </lineage>
</organism>
<name>ISPF_FRATT</name>
<proteinExistence type="evidence at protein level"/>
<feature type="chain" id="PRO_0000237726" description="2-C-methyl-D-erythritol 2,4-cyclodiphosphate synthase">
    <location>
        <begin position="1"/>
        <end position="159"/>
    </location>
</feature>
<feature type="binding site" evidence="1">
    <location>
        <begin position="10"/>
        <end position="12"/>
    </location>
    <ligand>
        <name>4-CDP-2-C-methyl-D-erythritol 2-phosphate</name>
        <dbReference type="ChEBI" id="CHEBI:57919"/>
    </ligand>
</feature>
<feature type="binding site" evidence="1">
    <location>
        <position position="10"/>
    </location>
    <ligand>
        <name>a divalent metal cation</name>
        <dbReference type="ChEBI" id="CHEBI:60240"/>
    </ligand>
</feature>
<feature type="binding site" evidence="1">
    <location>
        <position position="12"/>
    </location>
    <ligand>
        <name>a divalent metal cation</name>
        <dbReference type="ChEBI" id="CHEBI:60240"/>
    </ligand>
</feature>
<feature type="binding site" evidence="1">
    <location>
        <begin position="37"/>
        <end position="38"/>
    </location>
    <ligand>
        <name>4-CDP-2-C-methyl-D-erythritol 2-phosphate</name>
        <dbReference type="ChEBI" id="CHEBI:57919"/>
    </ligand>
</feature>
<feature type="binding site" evidence="1">
    <location>
        <position position="45"/>
    </location>
    <ligand>
        <name>a divalent metal cation</name>
        <dbReference type="ChEBI" id="CHEBI:60240"/>
    </ligand>
</feature>
<feature type="binding site" evidence="1">
    <location>
        <begin position="59"/>
        <end position="61"/>
    </location>
    <ligand>
        <name>4-CDP-2-C-methyl-D-erythritol 2-phosphate</name>
        <dbReference type="ChEBI" id="CHEBI:57919"/>
    </ligand>
</feature>
<feature type="binding site" evidence="1">
    <location>
        <begin position="64"/>
        <end position="68"/>
    </location>
    <ligand>
        <name>4-CDP-2-C-methyl-D-erythritol 2-phosphate</name>
        <dbReference type="ChEBI" id="CHEBI:57919"/>
    </ligand>
</feature>
<feature type="binding site" evidence="1">
    <location>
        <begin position="103"/>
        <end position="109"/>
    </location>
    <ligand>
        <name>4-CDP-2-C-methyl-D-erythritol 2-phosphate</name>
        <dbReference type="ChEBI" id="CHEBI:57919"/>
    </ligand>
</feature>
<feature type="binding site" evidence="1">
    <location>
        <begin position="135"/>
        <end position="138"/>
    </location>
    <ligand>
        <name>4-CDP-2-C-methyl-D-erythritol 2-phosphate</name>
        <dbReference type="ChEBI" id="CHEBI:57919"/>
    </ligand>
</feature>
<feature type="binding site" evidence="1">
    <location>
        <position position="142"/>
    </location>
    <ligand>
        <name>4-CDP-2-C-methyl-D-erythritol 2-phosphate</name>
        <dbReference type="ChEBI" id="CHEBI:57919"/>
    </ligand>
</feature>
<feature type="binding site" evidence="1">
    <location>
        <position position="145"/>
    </location>
    <ligand>
        <name>4-CDP-2-C-methyl-D-erythritol 2-phosphate</name>
        <dbReference type="ChEBI" id="CHEBI:57919"/>
    </ligand>
</feature>
<feature type="site" description="Transition state stabilizer" evidence="1">
    <location>
        <position position="37"/>
    </location>
</feature>
<feature type="site" description="Transition state stabilizer" evidence="1">
    <location>
        <position position="136"/>
    </location>
</feature>
<feature type="strand" evidence="4">
    <location>
        <begin position="2"/>
        <end position="13"/>
    </location>
</feature>
<feature type="strand" evidence="4">
    <location>
        <begin position="21"/>
        <end position="23"/>
    </location>
</feature>
<feature type="strand" evidence="4">
    <location>
        <begin position="26"/>
        <end position="28"/>
    </location>
</feature>
<feature type="helix" evidence="4">
    <location>
        <begin position="42"/>
        <end position="54"/>
    </location>
</feature>
<feature type="helix" evidence="4">
    <location>
        <begin position="60"/>
        <end position="63"/>
    </location>
</feature>
<feature type="helix" evidence="4">
    <location>
        <begin position="76"/>
        <end position="89"/>
    </location>
</feature>
<feature type="strand" evidence="4">
    <location>
        <begin position="93"/>
        <end position="102"/>
    </location>
</feature>
<feature type="strand" evidence="4">
    <location>
        <begin position="104"/>
        <end position="106"/>
    </location>
</feature>
<feature type="helix" evidence="4">
    <location>
        <begin position="109"/>
        <end position="111"/>
    </location>
</feature>
<feature type="helix" evidence="4">
    <location>
        <begin position="112"/>
        <end position="123"/>
    </location>
</feature>
<feature type="helix" evidence="4">
    <location>
        <begin position="127"/>
        <end position="129"/>
    </location>
</feature>
<feature type="strand" evidence="4">
    <location>
        <begin position="130"/>
        <end position="135"/>
    </location>
</feature>
<feature type="helix" evidence="4">
    <location>
        <begin position="141"/>
        <end position="144"/>
    </location>
</feature>
<feature type="strand" evidence="4">
    <location>
        <begin position="147"/>
        <end position="159"/>
    </location>
</feature>